<name>Y3364_BACAN</name>
<dbReference type="EC" id="7.-.-.-"/>
<dbReference type="EMBL" id="AE016879">
    <property type="protein sequence ID" value="AAP27136.1"/>
    <property type="molecule type" value="Genomic_DNA"/>
</dbReference>
<dbReference type="EMBL" id="AE017334">
    <property type="protein sequence ID" value="AAT32472.1"/>
    <property type="molecule type" value="Genomic_DNA"/>
</dbReference>
<dbReference type="EMBL" id="AE017225">
    <property type="protein sequence ID" value="AAT55426.1"/>
    <property type="status" value="ALT_INIT"/>
    <property type="molecule type" value="Genomic_DNA"/>
</dbReference>
<dbReference type="RefSeq" id="NP_845650.1">
    <property type="nucleotide sequence ID" value="NC_003997.3"/>
</dbReference>
<dbReference type="SMR" id="Q81N53"/>
<dbReference type="STRING" id="261594.GBAA_3364"/>
<dbReference type="DNASU" id="1084659"/>
<dbReference type="KEGG" id="ban:BA_3364"/>
<dbReference type="KEGG" id="bar:GBAA_3364"/>
<dbReference type="KEGG" id="bat:BAS3118"/>
<dbReference type="PATRIC" id="fig|1392.230.peg.3314"/>
<dbReference type="eggNOG" id="COG1122">
    <property type="taxonomic scope" value="Bacteria"/>
</dbReference>
<dbReference type="HOGENOM" id="CLU_000604_86_7_9"/>
<dbReference type="OMA" id="EACPNDM"/>
<dbReference type="Proteomes" id="UP000000427">
    <property type="component" value="Chromosome"/>
</dbReference>
<dbReference type="Proteomes" id="UP000000594">
    <property type="component" value="Chromosome"/>
</dbReference>
<dbReference type="GO" id="GO:0043190">
    <property type="term" value="C:ATP-binding cassette (ABC) transporter complex"/>
    <property type="evidence" value="ECO:0007669"/>
    <property type="project" value="TreeGrafter"/>
</dbReference>
<dbReference type="GO" id="GO:0005524">
    <property type="term" value="F:ATP binding"/>
    <property type="evidence" value="ECO:0007669"/>
    <property type="project" value="UniProtKB-KW"/>
</dbReference>
<dbReference type="GO" id="GO:0016887">
    <property type="term" value="F:ATP hydrolysis activity"/>
    <property type="evidence" value="ECO:0007669"/>
    <property type="project" value="InterPro"/>
</dbReference>
<dbReference type="GO" id="GO:0042626">
    <property type="term" value="F:ATPase-coupled transmembrane transporter activity"/>
    <property type="evidence" value="ECO:0007669"/>
    <property type="project" value="TreeGrafter"/>
</dbReference>
<dbReference type="CDD" id="cd03225">
    <property type="entry name" value="ABC_cobalt_CbiO_domain1"/>
    <property type="match status" value="1"/>
</dbReference>
<dbReference type="CDD" id="cd03226">
    <property type="entry name" value="ABC_cobalt_CbiO_domain2"/>
    <property type="match status" value="1"/>
</dbReference>
<dbReference type="Gene3D" id="3.40.50.300">
    <property type="entry name" value="P-loop containing nucleotide triphosphate hydrolases"/>
    <property type="match status" value="2"/>
</dbReference>
<dbReference type="InterPro" id="IPR003593">
    <property type="entry name" value="AAA+_ATPase"/>
</dbReference>
<dbReference type="InterPro" id="IPR003439">
    <property type="entry name" value="ABC_transporter-like_ATP-bd"/>
</dbReference>
<dbReference type="InterPro" id="IPR017871">
    <property type="entry name" value="ABC_transporter-like_CS"/>
</dbReference>
<dbReference type="InterPro" id="IPR015856">
    <property type="entry name" value="ABC_transpr_CbiO/EcfA_su"/>
</dbReference>
<dbReference type="InterPro" id="IPR050095">
    <property type="entry name" value="ECF_ABC_transporter_ATP-bd"/>
</dbReference>
<dbReference type="InterPro" id="IPR027417">
    <property type="entry name" value="P-loop_NTPase"/>
</dbReference>
<dbReference type="NCBIfam" id="NF010167">
    <property type="entry name" value="PRK13648.1"/>
    <property type="match status" value="2"/>
</dbReference>
<dbReference type="PANTHER" id="PTHR43553:SF27">
    <property type="entry name" value="ENERGY-COUPLING FACTOR TRANSPORTER ATP-BINDING PROTEIN ECFA2"/>
    <property type="match status" value="1"/>
</dbReference>
<dbReference type="PANTHER" id="PTHR43553">
    <property type="entry name" value="HEAVY METAL TRANSPORTER"/>
    <property type="match status" value="1"/>
</dbReference>
<dbReference type="Pfam" id="PF00005">
    <property type="entry name" value="ABC_tran"/>
    <property type="match status" value="2"/>
</dbReference>
<dbReference type="SMART" id="SM00382">
    <property type="entry name" value="AAA"/>
    <property type="match status" value="2"/>
</dbReference>
<dbReference type="SUPFAM" id="SSF52540">
    <property type="entry name" value="P-loop containing nucleoside triphosphate hydrolases"/>
    <property type="match status" value="2"/>
</dbReference>
<dbReference type="PROSITE" id="PS00211">
    <property type="entry name" value="ABC_TRANSPORTER_1"/>
    <property type="match status" value="2"/>
</dbReference>
<dbReference type="PROSITE" id="PS50893">
    <property type="entry name" value="ABC_TRANSPORTER_2"/>
    <property type="match status" value="2"/>
</dbReference>
<gene>
    <name type="ordered locus">BA_3364</name>
    <name type="ordered locus">GBAA_3364</name>
    <name type="ordered locus">BAS3118</name>
</gene>
<organism>
    <name type="scientific">Bacillus anthracis</name>
    <dbReference type="NCBI Taxonomy" id="1392"/>
    <lineage>
        <taxon>Bacteria</taxon>
        <taxon>Bacillati</taxon>
        <taxon>Bacillota</taxon>
        <taxon>Bacilli</taxon>
        <taxon>Bacillales</taxon>
        <taxon>Bacillaceae</taxon>
        <taxon>Bacillus</taxon>
        <taxon>Bacillus cereus group</taxon>
    </lineage>
</organism>
<feature type="chain" id="PRO_0000091972" description="Putative ABC transporter ATP-binding protein BA_3364/GBAA_3364/BAS3118">
    <location>
        <begin position="1"/>
        <end position="551"/>
    </location>
</feature>
<feature type="domain" description="ABC transporter 1" evidence="2">
    <location>
        <begin position="5"/>
        <end position="243"/>
    </location>
</feature>
<feature type="domain" description="ABC transporter 2" evidence="2">
    <location>
        <begin position="293"/>
        <end position="525"/>
    </location>
</feature>
<feature type="binding site" evidence="2">
    <location>
        <begin position="39"/>
        <end position="46"/>
    </location>
    <ligand>
        <name>ATP</name>
        <dbReference type="ChEBI" id="CHEBI:30616"/>
        <label>1</label>
    </ligand>
</feature>
<feature type="binding site" evidence="2">
    <location>
        <begin position="327"/>
        <end position="334"/>
    </location>
    <ligand>
        <name>ATP</name>
        <dbReference type="ChEBI" id="CHEBI:30616"/>
        <label>2</label>
    </ligand>
</feature>
<reference key="1">
    <citation type="journal article" date="2003" name="Nature">
        <title>The genome sequence of Bacillus anthracis Ames and comparison to closely related bacteria.</title>
        <authorList>
            <person name="Read T.D."/>
            <person name="Peterson S.N."/>
            <person name="Tourasse N.J."/>
            <person name="Baillie L.W."/>
            <person name="Paulsen I.T."/>
            <person name="Nelson K.E."/>
            <person name="Tettelin H."/>
            <person name="Fouts D.E."/>
            <person name="Eisen J.A."/>
            <person name="Gill S.R."/>
            <person name="Holtzapple E.K."/>
            <person name="Okstad O.A."/>
            <person name="Helgason E."/>
            <person name="Rilstone J."/>
            <person name="Wu M."/>
            <person name="Kolonay J.F."/>
            <person name="Beanan M.J."/>
            <person name="Dodson R.J."/>
            <person name="Brinkac L.M."/>
            <person name="Gwinn M.L."/>
            <person name="DeBoy R.T."/>
            <person name="Madpu R."/>
            <person name="Daugherty S.C."/>
            <person name="Durkin A.S."/>
            <person name="Haft D.H."/>
            <person name="Nelson W.C."/>
            <person name="Peterson J.D."/>
            <person name="Pop M."/>
            <person name="Khouri H.M."/>
            <person name="Radune D."/>
            <person name="Benton J.L."/>
            <person name="Mahamoud Y."/>
            <person name="Jiang L."/>
            <person name="Hance I.R."/>
            <person name="Weidman J.F."/>
            <person name="Berry K.J."/>
            <person name="Plaut R.D."/>
            <person name="Wolf A.M."/>
            <person name="Watkins K.L."/>
            <person name="Nierman W.C."/>
            <person name="Hazen A."/>
            <person name="Cline R.T."/>
            <person name="Redmond C."/>
            <person name="Thwaite J.E."/>
            <person name="White O."/>
            <person name="Salzberg S.L."/>
            <person name="Thomason B."/>
            <person name="Friedlander A.M."/>
            <person name="Koehler T.M."/>
            <person name="Hanna P.C."/>
            <person name="Kolstoe A.-B."/>
            <person name="Fraser C.M."/>
        </authorList>
    </citation>
    <scope>NUCLEOTIDE SEQUENCE [LARGE SCALE GENOMIC DNA]</scope>
    <source>
        <strain>Ames / isolate Porton</strain>
    </source>
</reference>
<reference key="2">
    <citation type="journal article" date="2009" name="J. Bacteriol.">
        <title>The complete genome sequence of Bacillus anthracis Ames 'Ancestor'.</title>
        <authorList>
            <person name="Ravel J."/>
            <person name="Jiang L."/>
            <person name="Stanley S.T."/>
            <person name="Wilson M.R."/>
            <person name="Decker R.S."/>
            <person name="Read T.D."/>
            <person name="Worsham P."/>
            <person name="Keim P.S."/>
            <person name="Salzberg S.L."/>
            <person name="Fraser-Liggett C.M."/>
            <person name="Rasko D.A."/>
        </authorList>
    </citation>
    <scope>NUCLEOTIDE SEQUENCE [LARGE SCALE GENOMIC DNA]</scope>
    <source>
        <strain>Ames ancestor</strain>
    </source>
</reference>
<reference key="3">
    <citation type="submission" date="2004-01" db="EMBL/GenBank/DDBJ databases">
        <title>Complete genome sequence of Bacillus anthracis Sterne.</title>
        <authorList>
            <person name="Brettin T.S."/>
            <person name="Bruce D."/>
            <person name="Challacombe J.F."/>
            <person name="Gilna P."/>
            <person name="Han C."/>
            <person name="Hill K."/>
            <person name="Hitchcock P."/>
            <person name="Jackson P."/>
            <person name="Keim P."/>
            <person name="Longmire J."/>
            <person name="Lucas S."/>
            <person name="Okinaka R."/>
            <person name="Richardson P."/>
            <person name="Rubin E."/>
            <person name="Tice H."/>
        </authorList>
    </citation>
    <scope>NUCLEOTIDE SEQUENCE [LARGE SCALE GENOMIC DNA]</scope>
    <source>
        <strain>Sterne</strain>
    </source>
</reference>
<comment type="function">
    <text evidence="1">Probably part of an ABC transporter complex. Responsible for energy coupling to the transport system (By similarity).</text>
</comment>
<comment type="subcellular location">
    <subcellularLocation>
        <location evidence="1">Cell membrane</location>
        <topology evidence="1">Peripheral membrane protein</topology>
    </subcellularLocation>
</comment>
<comment type="similarity">
    <text evidence="3">Belongs to the ABC transporter superfamily.</text>
</comment>
<comment type="sequence caution" evidence="3">
    <conflict type="erroneous initiation">
        <sequence resource="EMBL-CDS" id="AAT55426"/>
    </conflict>
</comment>
<protein>
    <recommendedName>
        <fullName>Putative ABC transporter ATP-binding protein BA_3364/GBAA_3364/BAS3118</fullName>
        <ecNumber>7.-.-.-</ecNumber>
    </recommendedName>
</protein>
<evidence type="ECO:0000250" key="1"/>
<evidence type="ECO:0000255" key="2">
    <source>
        <dbReference type="PROSITE-ProRule" id="PRU00434"/>
    </source>
</evidence>
<evidence type="ECO:0000305" key="3"/>
<accession>Q81N53</accession>
<accession>Q6HWB3</accession>
<accession>Q6KQG4</accession>
<sequence length="551" mass="62620">MVAHAEIKNLSFVYADENEKALQHISLSVQKGEFIALAGGSGSGKTTLLKHFKKELLPIGKRTGDTYYDGTLLENVPDLLSAQEIGMVFQNPENQLVMDTVIQELAFSLENIGLPSHIIQKRIAELISFLGFQDLLHQSVHTLSGGQKQLVNLAAVLVMQPKLLLLDEPTAQLDPIAAKEFLGLLKRINEELGITIVLSEHRLDEVIPLATRVICMNNGRIVYDGSPKTVVANMWEVEKFRPFIPQIPRLFLEWNAKDIPFTVREAQMKLNDFLAISYVSEPIVQSEKQEVILSAEHISFQYEKNNPLILRDLTVSIEKGKWVALVGKNGTGKSTLLTILAGLQKARRGKVKWNGKVIHKIDSKERFKSIGYVSQHPYYHFTFDTVWDEVYERARELYGEQGKEIAEHQLKKFWLYGLKERHPHDCSGGEQQLLALCTTLLSKPTLLLLDEPTKGLDPWKKERVGELFRKLQKEGTTIVMATHDIEFAAKYVDQCMMLFDGAVIMNDAPKEFFSGNFFYTTSINRFIRKELPYALTWEDVYEACQNDMLHS</sequence>
<keyword id="KW-0067">ATP-binding</keyword>
<keyword id="KW-1003">Cell membrane</keyword>
<keyword id="KW-0472">Membrane</keyword>
<keyword id="KW-0547">Nucleotide-binding</keyword>
<keyword id="KW-1185">Reference proteome</keyword>
<keyword id="KW-0677">Repeat</keyword>
<keyword id="KW-1278">Translocase</keyword>
<keyword id="KW-0813">Transport</keyword>
<proteinExistence type="inferred from homology"/>